<feature type="chain" id="PRO_1000204990" description="Trigger factor">
    <location>
        <begin position="1"/>
        <end position="435"/>
    </location>
</feature>
<feature type="domain" description="PPIase FKBP-type" evidence="1">
    <location>
        <begin position="163"/>
        <end position="248"/>
    </location>
</feature>
<sequence length="435" mass="48713">MQISVESVNSIKKKLNFEIPADKVSAEVDKAYAEIRKHAAIKGFRKGKVPMSLIEKHYGEKMAEDVVKNLVQESYFSAVSEQGLNPVGYPAIESDQLKKGEPFKYSATVEVFPEVEVKDYTGLEVVKEKLEVDDSVVAARLKEMQERMAQLGPAPEGHAAAMGDFVTFDFKGSIDGVYFEGGSAEDFQLELGSGRFIPGFEEQMVGMTVGTNSTIKVNFPEGYGNADLSGKPADFEVSVKEIKVKELPELNDDFAKEFGEEFETLDLLKAKLAEINETQEASRINAELRDRLIKALIEKNEIEVPEALVDRQVQMMLESTKQRLASQRLSLDMMGMTDDSYKAQFREAAREQVKGSLLLDAVAEKEKIEPTEEELEAQLSVIAEQTRQDLEKVAQLYKTNERAKDNLMAQMREDKAVKFILDRAKVTEVPKAEIK</sequence>
<organism>
    <name type="scientific">Geobacter sp. (strain M21)</name>
    <dbReference type="NCBI Taxonomy" id="443144"/>
    <lineage>
        <taxon>Bacteria</taxon>
        <taxon>Pseudomonadati</taxon>
        <taxon>Thermodesulfobacteriota</taxon>
        <taxon>Desulfuromonadia</taxon>
        <taxon>Geobacterales</taxon>
        <taxon>Geobacteraceae</taxon>
        <taxon>Geobacter</taxon>
    </lineage>
</organism>
<accession>C6E2T1</accession>
<evidence type="ECO:0000255" key="1">
    <source>
        <dbReference type="HAMAP-Rule" id="MF_00303"/>
    </source>
</evidence>
<protein>
    <recommendedName>
        <fullName evidence="1">Trigger factor</fullName>
        <shortName evidence="1">TF</shortName>
        <ecNumber evidence="1">5.2.1.8</ecNumber>
    </recommendedName>
    <alternativeName>
        <fullName evidence="1">PPIase</fullName>
    </alternativeName>
</protein>
<comment type="function">
    <text evidence="1">Involved in protein export. Acts as a chaperone by maintaining the newly synthesized protein in an open conformation. Functions as a peptidyl-prolyl cis-trans isomerase.</text>
</comment>
<comment type="catalytic activity">
    <reaction evidence="1">
        <text>[protein]-peptidylproline (omega=180) = [protein]-peptidylproline (omega=0)</text>
        <dbReference type="Rhea" id="RHEA:16237"/>
        <dbReference type="Rhea" id="RHEA-COMP:10747"/>
        <dbReference type="Rhea" id="RHEA-COMP:10748"/>
        <dbReference type="ChEBI" id="CHEBI:83833"/>
        <dbReference type="ChEBI" id="CHEBI:83834"/>
        <dbReference type="EC" id="5.2.1.8"/>
    </reaction>
</comment>
<comment type="subcellular location">
    <subcellularLocation>
        <location>Cytoplasm</location>
    </subcellularLocation>
    <text evidence="1">About half TF is bound to the ribosome near the polypeptide exit tunnel while the other half is free in the cytoplasm.</text>
</comment>
<comment type="domain">
    <text evidence="1">Consists of 3 domains; the N-terminus binds the ribosome, the middle domain has PPIase activity, while the C-terminus has intrinsic chaperone activity on its own.</text>
</comment>
<comment type="similarity">
    <text evidence="1">Belongs to the FKBP-type PPIase family. Tig subfamily.</text>
</comment>
<dbReference type="EC" id="5.2.1.8" evidence="1"/>
<dbReference type="EMBL" id="CP001661">
    <property type="protein sequence ID" value="ACT19041.1"/>
    <property type="molecule type" value="Genomic_DNA"/>
</dbReference>
<dbReference type="SMR" id="C6E2T1"/>
<dbReference type="STRING" id="443144.GM21_3012"/>
<dbReference type="KEGG" id="gem:GM21_3012"/>
<dbReference type="eggNOG" id="COG0544">
    <property type="taxonomic scope" value="Bacteria"/>
</dbReference>
<dbReference type="HOGENOM" id="CLU_033058_3_2_7"/>
<dbReference type="OrthoDB" id="9767721at2"/>
<dbReference type="GO" id="GO:0005737">
    <property type="term" value="C:cytoplasm"/>
    <property type="evidence" value="ECO:0007669"/>
    <property type="project" value="UniProtKB-SubCell"/>
</dbReference>
<dbReference type="GO" id="GO:0003755">
    <property type="term" value="F:peptidyl-prolyl cis-trans isomerase activity"/>
    <property type="evidence" value="ECO:0007669"/>
    <property type="project" value="UniProtKB-UniRule"/>
</dbReference>
<dbReference type="GO" id="GO:0044183">
    <property type="term" value="F:protein folding chaperone"/>
    <property type="evidence" value="ECO:0007669"/>
    <property type="project" value="TreeGrafter"/>
</dbReference>
<dbReference type="GO" id="GO:0043022">
    <property type="term" value="F:ribosome binding"/>
    <property type="evidence" value="ECO:0007669"/>
    <property type="project" value="TreeGrafter"/>
</dbReference>
<dbReference type="GO" id="GO:0051083">
    <property type="term" value="P:'de novo' cotranslational protein folding"/>
    <property type="evidence" value="ECO:0007669"/>
    <property type="project" value="TreeGrafter"/>
</dbReference>
<dbReference type="GO" id="GO:0051301">
    <property type="term" value="P:cell division"/>
    <property type="evidence" value="ECO:0007669"/>
    <property type="project" value="UniProtKB-KW"/>
</dbReference>
<dbReference type="GO" id="GO:0061077">
    <property type="term" value="P:chaperone-mediated protein folding"/>
    <property type="evidence" value="ECO:0007669"/>
    <property type="project" value="TreeGrafter"/>
</dbReference>
<dbReference type="GO" id="GO:0015031">
    <property type="term" value="P:protein transport"/>
    <property type="evidence" value="ECO:0007669"/>
    <property type="project" value="UniProtKB-UniRule"/>
</dbReference>
<dbReference type="GO" id="GO:0043335">
    <property type="term" value="P:protein unfolding"/>
    <property type="evidence" value="ECO:0007669"/>
    <property type="project" value="TreeGrafter"/>
</dbReference>
<dbReference type="FunFam" id="3.10.50.40:FF:000001">
    <property type="entry name" value="Trigger factor"/>
    <property type="match status" value="1"/>
</dbReference>
<dbReference type="Gene3D" id="3.10.50.40">
    <property type="match status" value="1"/>
</dbReference>
<dbReference type="Gene3D" id="3.30.70.1050">
    <property type="entry name" value="Trigger factor ribosome-binding domain"/>
    <property type="match status" value="1"/>
</dbReference>
<dbReference type="Gene3D" id="1.10.3120.10">
    <property type="entry name" value="Trigger factor, C-terminal domain"/>
    <property type="match status" value="1"/>
</dbReference>
<dbReference type="HAMAP" id="MF_00303">
    <property type="entry name" value="Trigger_factor_Tig"/>
    <property type="match status" value="1"/>
</dbReference>
<dbReference type="InterPro" id="IPR046357">
    <property type="entry name" value="PPIase_dom_sf"/>
</dbReference>
<dbReference type="InterPro" id="IPR001179">
    <property type="entry name" value="PPIase_FKBP_dom"/>
</dbReference>
<dbReference type="InterPro" id="IPR005215">
    <property type="entry name" value="Trig_fac"/>
</dbReference>
<dbReference type="InterPro" id="IPR008880">
    <property type="entry name" value="Trigger_fac_C"/>
</dbReference>
<dbReference type="InterPro" id="IPR037041">
    <property type="entry name" value="Trigger_fac_C_sf"/>
</dbReference>
<dbReference type="InterPro" id="IPR008881">
    <property type="entry name" value="Trigger_fac_ribosome-bd_bac"/>
</dbReference>
<dbReference type="InterPro" id="IPR036611">
    <property type="entry name" value="Trigger_fac_ribosome-bd_sf"/>
</dbReference>
<dbReference type="InterPro" id="IPR027304">
    <property type="entry name" value="Trigger_fact/SurA_dom_sf"/>
</dbReference>
<dbReference type="NCBIfam" id="TIGR00115">
    <property type="entry name" value="tig"/>
    <property type="match status" value="1"/>
</dbReference>
<dbReference type="PANTHER" id="PTHR30560">
    <property type="entry name" value="TRIGGER FACTOR CHAPERONE AND PEPTIDYL-PROLYL CIS/TRANS ISOMERASE"/>
    <property type="match status" value="1"/>
</dbReference>
<dbReference type="PANTHER" id="PTHR30560:SF3">
    <property type="entry name" value="TRIGGER FACTOR-LIKE PROTEIN TIG, CHLOROPLASTIC"/>
    <property type="match status" value="1"/>
</dbReference>
<dbReference type="Pfam" id="PF00254">
    <property type="entry name" value="FKBP_C"/>
    <property type="match status" value="1"/>
</dbReference>
<dbReference type="Pfam" id="PF05698">
    <property type="entry name" value="Trigger_C"/>
    <property type="match status" value="1"/>
</dbReference>
<dbReference type="Pfam" id="PF05697">
    <property type="entry name" value="Trigger_N"/>
    <property type="match status" value="1"/>
</dbReference>
<dbReference type="PIRSF" id="PIRSF003095">
    <property type="entry name" value="Trigger_factor"/>
    <property type="match status" value="1"/>
</dbReference>
<dbReference type="SUPFAM" id="SSF54534">
    <property type="entry name" value="FKBP-like"/>
    <property type="match status" value="1"/>
</dbReference>
<dbReference type="SUPFAM" id="SSF109998">
    <property type="entry name" value="Triger factor/SurA peptide-binding domain-like"/>
    <property type="match status" value="1"/>
</dbReference>
<dbReference type="SUPFAM" id="SSF102735">
    <property type="entry name" value="Trigger factor ribosome-binding domain"/>
    <property type="match status" value="1"/>
</dbReference>
<dbReference type="PROSITE" id="PS50059">
    <property type="entry name" value="FKBP_PPIASE"/>
    <property type="match status" value="1"/>
</dbReference>
<keyword id="KW-0131">Cell cycle</keyword>
<keyword id="KW-0132">Cell division</keyword>
<keyword id="KW-0143">Chaperone</keyword>
<keyword id="KW-0963">Cytoplasm</keyword>
<keyword id="KW-0413">Isomerase</keyword>
<keyword id="KW-0697">Rotamase</keyword>
<name>TIG_GEOSM</name>
<gene>
    <name evidence="1" type="primary">tig</name>
    <name type="ordered locus">GM21_3012</name>
</gene>
<proteinExistence type="inferred from homology"/>
<reference key="1">
    <citation type="submission" date="2009-07" db="EMBL/GenBank/DDBJ databases">
        <title>Complete sequence of Geobacter sp. M21.</title>
        <authorList>
            <consortium name="US DOE Joint Genome Institute"/>
            <person name="Lucas S."/>
            <person name="Copeland A."/>
            <person name="Lapidus A."/>
            <person name="Glavina del Rio T."/>
            <person name="Dalin E."/>
            <person name="Tice H."/>
            <person name="Bruce D."/>
            <person name="Goodwin L."/>
            <person name="Pitluck S."/>
            <person name="Saunders E."/>
            <person name="Brettin T."/>
            <person name="Detter J.C."/>
            <person name="Han C."/>
            <person name="Larimer F."/>
            <person name="Land M."/>
            <person name="Hauser L."/>
            <person name="Kyrpides N."/>
            <person name="Ovchinnikova G."/>
            <person name="Lovley D."/>
        </authorList>
    </citation>
    <scope>NUCLEOTIDE SEQUENCE [LARGE SCALE GENOMIC DNA]</scope>
    <source>
        <strain>M21</strain>
    </source>
</reference>